<comment type="function">
    <text evidence="1">Regulator of peptidoglycan synthesis that is essential for the function of penicillin-binding protein 1B (PBP1b).</text>
</comment>
<comment type="subunit">
    <text evidence="1">Interacts with PBP1b.</text>
</comment>
<comment type="subcellular location">
    <subcellularLocation>
        <location evidence="1">Cell outer membrane</location>
        <topology evidence="1">Lipid-anchor</topology>
        <orientation evidence="1">Periplasmic side</orientation>
    </subcellularLocation>
</comment>
<comment type="similarity">
    <text evidence="1">Belongs to the LpoB family.</text>
</comment>
<keyword id="KW-0998">Cell outer membrane</keyword>
<keyword id="KW-0133">Cell shape</keyword>
<keyword id="KW-0449">Lipoprotein</keyword>
<keyword id="KW-0472">Membrane</keyword>
<keyword id="KW-0564">Palmitate</keyword>
<keyword id="KW-0573">Peptidoglycan synthesis</keyword>
<keyword id="KW-1185">Reference proteome</keyword>
<keyword id="KW-0732">Signal</keyword>
<feature type="signal peptide" evidence="1">
    <location>
        <begin position="1"/>
        <end position="16"/>
    </location>
</feature>
<feature type="chain" id="PRO_0000405789" description="Penicillin-binding protein activator LpoB">
    <location>
        <begin position="17"/>
        <end position="193"/>
    </location>
</feature>
<feature type="region of interest" description="Disordered" evidence="2">
    <location>
        <begin position="23"/>
        <end position="50"/>
    </location>
</feature>
<feature type="compositionally biased region" description="Pro residues" evidence="2">
    <location>
        <begin position="37"/>
        <end position="46"/>
    </location>
</feature>
<feature type="lipid moiety-binding region" description="N-palmitoyl cysteine" evidence="1">
    <location>
        <position position="17"/>
    </location>
</feature>
<feature type="lipid moiety-binding region" description="S-diacylglycerol cysteine" evidence="1">
    <location>
        <position position="17"/>
    </location>
</feature>
<accession>B4EVE5</accession>
<sequence length="193" mass="20645">MKKMLFVVAAVFLLAGCPSMLPQQPPAPVEPVTPTEPTEPPKPIEPPIEVVPTPPKITSINWNAAIQPLIREMSVTDDLATGKLLVVDNVKNNSGGNIQAVNATNTIIDSVNSISALQTVPYAQMMSARKALGLSGEDSLGLRSAAIGLARYLQADYILFSTVDGKKDNRVISMQLMSVASGEILWSGRHKVE</sequence>
<evidence type="ECO:0000255" key="1">
    <source>
        <dbReference type="HAMAP-Rule" id="MF_01889"/>
    </source>
</evidence>
<evidence type="ECO:0000256" key="2">
    <source>
        <dbReference type="SAM" id="MobiDB-lite"/>
    </source>
</evidence>
<name>LPOB_PROMH</name>
<proteinExistence type="inferred from homology"/>
<protein>
    <recommendedName>
        <fullName evidence="1">Penicillin-binding protein activator LpoB</fullName>
        <shortName evidence="1">PBP activator LpoB</shortName>
    </recommendedName>
</protein>
<dbReference type="EMBL" id="AM942759">
    <property type="protein sequence ID" value="CAR41968.1"/>
    <property type="molecule type" value="Genomic_DNA"/>
</dbReference>
<dbReference type="RefSeq" id="WP_004247096.1">
    <property type="nucleotide sequence ID" value="NC_010554.1"/>
</dbReference>
<dbReference type="SMR" id="B4EVE5"/>
<dbReference type="EnsemblBacteria" id="CAR41968">
    <property type="protein sequence ID" value="CAR41968"/>
    <property type="gene ID" value="PMI0871"/>
</dbReference>
<dbReference type="GeneID" id="6803410"/>
<dbReference type="KEGG" id="pmr:PMI0871"/>
<dbReference type="eggNOG" id="COG3417">
    <property type="taxonomic scope" value="Bacteria"/>
</dbReference>
<dbReference type="HOGENOM" id="CLU_092328_0_0_6"/>
<dbReference type="Proteomes" id="UP000008319">
    <property type="component" value="Chromosome"/>
</dbReference>
<dbReference type="GO" id="GO:0031241">
    <property type="term" value="C:periplasmic side of cell outer membrane"/>
    <property type="evidence" value="ECO:0007669"/>
    <property type="project" value="UniProtKB-UniRule"/>
</dbReference>
<dbReference type="GO" id="GO:0030234">
    <property type="term" value="F:enzyme regulator activity"/>
    <property type="evidence" value="ECO:0007669"/>
    <property type="project" value="UniProtKB-UniRule"/>
</dbReference>
<dbReference type="GO" id="GO:0009252">
    <property type="term" value="P:peptidoglycan biosynthetic process"/>
    <property type="evidence" value="ECO:0007669"/>
    <property type="project" value="UniProtKB-UniRule"/>
</dbReference>
<dbReference type="GO" id="GO:0008360">
    <property type="term" value="P:regulation of cell shape"/>
    <property type="evidence" value="ECO:0007669"/>
    <property type="project" value="UniProtKB-KW"/>
</dbReference>
<dbReference type="Gene3D" id="3.40.50.10610">
    <property type="entry name" value="ABC-type transport auxiliary lipoprotein component"/>
    <property type="match status" value="1"/>
</dbReference>
<dbReference type="HAMAP" id="MF_01889">
    <property type="entry name" value="LpoB"/>
    <property type="match status" value="1"/>
</dbReference>
<dbReference type="InterPro" id="IPR014094">
    <property type="entry name" value="LpoB"/>
</dbReference>
<dbReference type="PANTHER" id="PTHR40593">
    <property type="entry name" value="PENICILLIN-BINDING PROTEIN ACTIVATOR LPOB"/>
    <property type="match status" value="1"/>
</dbReference>
<dbReference type="PANTHER" id="PTHR40593:SF1">
    <property type="entry name" value="PENICILLIN-BINDING PROTEIN ACTIVATOR LPOB"/>
    <property type="match status" value="1"/>
</dbReference>
<dbReference type="Pfam" id="PF13036">
    <property type="entry name" value="LpoB"/>
    <property type="match status" value="1"/>
</dbReference>
<dbReference type="PROSITE" id="PS51257">
    <property type="entry name" value="PROKAR_LIPOPROTEIN"/>
    <property type="match status" value="1"/>
</dbReference>
<reference key="1">
    <citation type="journal article" date="2008" name="J. Bacteriol.">
        <title>Complete genome sequence of uropathogenic Proteus mirabilis, a master of both adherence and motility.</title>
        <authorList>
            <person name="Pearson M.M."/>
            <person name="Sebaihia M."/>
            <person name="Churcher C."/>
            <person name="Quail M.A."/>
            <person name="Seshasayee A.S."/>
            <person name="Luscombe N.M."/>
            <person name="Abdellah Z."/>
            <person name="Arrosmith C."/>
            <person name="Atkin B."/>
            <person name="Chillingworth T."/>
            <person name="Hauser H."/>
            <person name="Jagels K."/>
            <person name="Moule S."/>
            <person name="Mungall K."/>
            <person name="Norbertczak H."/>
            <person name="Rabbinowitsch E."/>
            <person name="Walker D."/>
            <person name="Whithead S."/>
            <person name="Thomson N.R."/>
            <person name="Rather P.N."/>
            <person name="Parkhill J."/>
            <person name="Mobley H.L.T."/>
        </authorList>
    </citation>
    <scope>NUCLEOTIDE SEQUENCE [LARGE SCALE GENOMIC DNA]</scope>
    <source>
        <strain>HI4320</strain>
    </source>
</reference>
<organism>
    <name type="scientific">Proteus mirabilis (strain HI4320)</name>
    <dbReference type="NCBI Taxonomy" id="529507"/>
    <lineage>
        <taxon>Bacteria</taxon>
        <taxon>Pseudomonadati</taxon>
        <taxon>Pseudomonadota</taxon>
        <taxon>Gammaproteobacteria</taxon>
        <taxon>Enterobacterales</taxon>
        <taxon>Morganellaceae</taxon>
        <taxon>Proteus</taxon>
    </lineage>
</organism>
<gene>
    <name evidence="1" type="primary">lpoB</name>
    <name type="ordered locus">PMI0871</name>
</gene>